<gene>
    <name evidence="1" type="primary">yjjB</name>
    <name type="ordered locus">ECA3865</name>
</gene>
<protein>
    <recommendedName>
        <fullName evidence="1">Probable succinate transporter subunit YjjB</fullName>
    </recommendedName>
</protein>
<name>YJJB_PECAS</name>
<organism>
    <name type="scientific">Pectobacterium atrosepticum (strain SCRI 1043 / ATCC BAA-672)</name>
    <name type="common">Erwinia carotovora subsp. atroseptica</name>
    <dbReference type="NCBI Taxonomy" id="218491"/>
    <lineage>
        <taxon>Bacteria</taxon>
        <taxon>Pseudomonadati</taxon>
        <taxon>Pseudomonadota</taxon>
        <taxon>Gammaproteobacteria</taxon>
        <taxon>Enterobacterales</taxon>
        <taxon>Pectobacteriaceae</taxon>
        <taxon>Pectobacterium</taxon>
    </lineage>
</organism>
<proteinExistence type="inferred from homology"/>
<dbReference type="EMBL" id="BX950851">
    <property type="protein sequence ID" value="CAG76763.1"/>
    <property type="molecule type" value="Genomic_DNA"/>
</dbReference>
<dbReference type="RefSeq" id="WP_011095363.1">
    <property type="nucleotide sequence ID" value="NC_004547.2"/>
</dbReference>
<dbReference type="STRING" id="218491.ECA3865"/>
<dbReference type="KEGG" id="eca:ECA3865"/>
<dbReference type="eggNOG" id="COG3610">
    <property type="taxonomic scope" value="Bacteria"/>
</dbReference>
<dbReference type="HOGENOM" id="CLU_117642_1_0_6"/>
<dbReference type="OrthoDB" id="9810047at2"/>
<dbReference type="Proteomes" id="UP000007966">
    <property type="component" value="Chromosome"/>
</dbReference>
<dbReference type="GO" id="GO:0005886">
    <property type="term" value="C:plasma membrane"/>
    <property type="evidence" value="ECO:0007669"/>
    <property type="project" value="UniProtKB-SubCell"/>
</dbReference>
<dbReference type="GO" id="GO:0015744">
    <property type="term" value="P:succinate transport"/>
    <property type="evidence" value="ECO:0007669"/>
    <property type="project" value="UniProtKB-UniRule"/>
</dbReference>
<dbReference type="HAMAP" id="MF_01191">
    <property type="entry name" value="YjjB"/>
    <property type="match status" value="1"/>
</dbReference>
<dbReference type="InterPro" id="IPR024528">
    <property type="entry name" value="ThrE_2"/>
</dbReference>
<dbReference type="InterPro" id="IPR050539">
    <property type="entry name" value="ThrE_Dicarb/AminoAcid_Exp"/>
</dbReference>
<dbReference type="InterPro" id="IPR020914">
    <property type="entry name" value="YjjB"/>
</dbReference>
<dbReference type="NCBIfam" id="NF007391">
    <property type="entry name" value="PRK09917.1"/>
    <property type="match status" value="1"/>
</dbReference>
<dbReference type="PANTHER" id="PTHR34390:SF1">
    <property type="entry name" value="SUCCINATE TRANSPORTER SUBUNIT YJJB-RELATED"/>
    <property type="match status" value="1"/>
</dbReference>
<dbReference type="PANTHER" id="PTHR34390">
    <property type="entry name" value="UPF0442 PROTEIN YJJB-RELATED"/>
    <property type="match status" value="1"/>
</dbReference>
<dbReference type="Pfam" id="PF12821">
    <property type="entry name" value="ThrE_2"/>
    <property type="match status" value="1"/>
</dbReference>
<evidence type="ECO:0000255" key="1">
    <source>
        <dbReference type="HAMAP-Rule" id="MF_01191"/>
    </source>
</evidence>
<feature type="chain" id="PRO_0000293668" description="Probable succinate transporter subunit YjjB">
    <location>
        <begin position="1"/>
        <end position="156"/>
    </location>
</feature>
<feature type="transmembrane region" description="Helical" evidence="1">
    <location>
        <begin position="7"/>
        <end position="27"/>
    </location>
</feature>
<feature type="transmembrane region" description="Helical" evidence="1">
    <location>
        <begin position="54"/>
        <end position="74"/>
    </location>
</feature>
<feature type="transmembrane region" description="Helical" evidence="1">
    <location>
        <begin position="86"/>
        <end position="106"/>
    </location>
</feature>
<feature type="transmembrane region" description="Helical" evidence="1">
    <location>
        <begin position="128"/>
        <end position="148"/>
    </location>
</feature>
<comment type="function">
    <text evidence="1">Involved in succinate export with YjjP. Both proteins are required for export.</text>
</comment>
<comment type="subunit">
    <text evidence="1">The transporter is composed of YjjB and YjjP.</text>
</comment>
<comment type="subcellular location">
    <subcellularLocation>
        <location evidence="1">Cell inner membrane</location>
        <topology evidence="1">Multi-pass membrane protein</topology>
    </subcellularLocation>
</comment>
<comment type="similarity">
    <text evidence="1">Belongs to the ThrE exporter (TC 2.A.79) family.</text>
</comment>
<reference key="1">
    <citation type="journal article" date="2004" name="Proc. Natl. Acad. Sci. U.S.A.">
        <title>Genome sequence of the enterobacterial phytopathogen Erwinia carotovora subsp. atroseptica and characterization of virulence factors.</title>
        <authorList>
            <person name="Bell K.S."/>
            <person name="Sebaihia M."/>
            <person name="Pritchard L."/>
            <person name="Holden M.T.G."/>
            <person name="Hyman L.J."/>
            <person name="Holeva M.C."/>
            <person name="Thomson N.R."/>
            <person name="Bentley S.D."/>
            <person name="Churcher L.J.C."/>
            <person name="Mungall K."/>
            <person name="Atkin R."/>
            <person name="Bason N."/>
            <person name="Brooks K."/>
            <person name="Chillingworth T."/>
            <person name="Clark K."/>
            <person name="Doggett J."/>
            <person name="Fraser A."/>
            <person name="Hance Z."/>
            <person name="Hauser H."/>
            <person name="Jagels K."/>
            <person name="Moule S."/>
            <person name="Norbertczak H."/>
            <person name="Ormond D."/>
            <person name="Price C."/>
            <person name="Quail M.A."/>
            <person name="Sanders M."/>
            <person name="Walker D."/>
            <person name="Whitehead S."/>
            <person name="Salmond G.P.C."/>
            <person name="Birch P.R.J."/>
            <person name="Parkhill J."/>
            <person name="Toth I.K."/>
        </authorList>
    </citation>
    <scope>NUCLEOTIDE SEQUENCE [LARGE SCALE GENOMIC DNA]</scope>
    <source>
        <strain>SCRI 1043 / ATCC BAA-672</strain>
    </source>
</reference>
<sequence length="156" mass="16873">MGLSLLWALLQDMVLAAVPALGFAMVFNVPLKVLPYCALLGGVGHGVRFLAIHFGMNIEWASFLAAILIGIIGIRWSRWLLAHPKVFTVAAVIPMFPGISAYTAMISVVEISHLGYSEALMSVMMTNFLKASFIVGALSIGLSLPGIWLYRKRPGV</sequence>
<accession>Q6D0D4</accession>
<keyword id="KW-0997">Cell inner membrane</keyword>
<keyword id="KW-1003">Cell membrane</keyword>
<keyword id="KW-0472">Membrane</keyword>
<keyword id="KW-1185">Reference proteome</keyword>
<keyword id="KW-0812">Transmembrane</keyword>
<keyword id="KW-1133">Transmembrane helix</keyword>
<keyword id="KW-0813">Transport</keyword>